<keyword id="KW-0030">Aminoacyl-tRNA synthetase</keyword>
<keyword id="KW-0067">ATP-binding</keyword>
<keyword id="KW-0963">Cytoplasm</keyword>
<keyword id="KW-0436">Ligase</keyword>
<keyword id="KW-0479">Metal-binding</keyword>
<keyword id="KW-0547">Nucleotide-binding</keyword>
<keyword id="KW-0648">Protein biosynthesis</keyword>
<keyword id="KW-1185">Reference proteome</keyword>
<keyword id="KW-0862">Zinc</keyword>
<proteinExistence type="inferred from homology"/>
<organism>
    <name type="scientific">Synechococcus sp. (strain CC9311)</name>
    <dbReference type="NCBI Taxonomy" id="64471"/>
    <lineage>
        <taxon>Bacteria</taxon>
        <taxon>Bacillati</taxon>
        <taxon>Cyanobacteriota</taxon>
        <taxon>Cyanophyceae</taxon>
        <taxon>Synechococcales</taxon>
        <taxon>Synechococcaceae</taxon>
        <taxon>Synechococcus</taxon>
    </lineage>
</organism>
<evidence type="ECO:0000255" key="1">
    <source>
        <dbReference type="HAMAP-Rule" id="MF_02002"/>
    </source>
</evidence>
<comment type="function">
    <text evidence="1">Catalyzes the attachment of isoleucine to tRNA(Ile). As IleRS can inadvertently accommodate and process structurally similar amino acids such as valine, to avoid such errors it has two additional distinct tRNA(Ile)-dependent editing activities. One activity is designated as 'pretransfer' editing and involves the hydrolysis of activated Val-AMP. The other activity is designated 'posttransfer' editing and involves deacylation of mischarged Val-tRNA(Ile).</text>
</comment>
<comment type="catalytic activity">
    <reaction evidence="1">
        <text>tRNA(Ile) + L-isoleucine + ATP = L-isoleucyl-tRNA(Ile) + AMP + diphosphate</text>
        <dbReference type="Rhea" id="RHEA:11060"/>
        <dbReference type="Rhea" id="RHEA-COMP:9666"/>
        <dbReference type="Rhea" id="RHEA-COMP:9695"/>
        <dbReference type="ChEBI" id="CHEBI:30616"/>
        <dbReference type="ChEBI" id="CHEBI:33019"/>
        <dbReference type="ChEBI" id="CHEBI:58045"/>
        <dbReference type="ChEBI" id="CHEBI:78442"/>
        <dbReference type="ChEBI" id="CHEBI:78528"/>
        <dbReference type="ChEBI" id="CHEBI:456215"/>
        <dbReference type="EC" id="6.1.1.5"/>
    </reaction>
</comment>
<comment type="cofactor">
    <cofactor evidence="1">
        <name>Zn(2+)</name>
        <dbReference type="ChEBI" id="CHEBI:29105"/>
    </cofactor>
    <text evidence="1">Binds 1 zinc ion per subunit.</text>
</comment>
<comment type="subunit">
    <text evidence="1">Monomer.</text>
</comment>
<comment type="subcellular location">
    <subcellularLocation>
        <location evidence="1">Cytoplasm</location>
    </subcellularLocation>
</comment>
<comment type="domain">
    <text evidence="1">IleRS has two distinct active sites: one for aminoacylation and one for editing. The misactivated valine is translocated from the active site to the editing site, which sterically excludes the correctly activated isoleucine. The single editing site contains two valyl binding pockets, one specific for each substrate (Val-AMP or Val-tRNA(Ile)).</text>
</comment>
<comment type="similarity">
    <text evidence="1">Belongs to the class-I aminoacyl-tRNA synthetase family. IleS type 1 subfamily.</text>
</comment>
<accession>Q0IDA5</accession>
<feature type="chain" id="PRO_1000022135" description="Isoleucine--tRNA ligase">
    <location>
        <begin position="1"/>
        <end position="968"/>
    </location>
</feature>
<feature type="short sequence motif" description="'HIGH' region">
    <location>
        <begin position="68"/>
        <end position="78"/>
    </location>
</feature>
<feature type="short sequence motif" description="'KMSKS' region">
    <location>
        <begin position="625"/>
        <end position="629"/>
    </location>
</feature>
<feature type="binding site" evidence="1">
    <location>
        <position position="584"/>
    </location>
    <ligand>
        <name>L-isoleucyl-5'-AMP</name>
        <dbReference type="ChEBI" id="CHEBI:178002"/>
    </ligand>
</feature>
<feature type="binding site" evidence="1">
    <location>
        <position position="628"/>
    </location>
    <ligand>
        <name>ATP</name>
        <dbReference type="ChEBI" id="CHEBI:30616"/>
    </ligand>
</feature>
<feature type="binding site" evidence="1">
    <location>
        <position position="938"/>
    </location>
    <ligand>
        <name>Zn(2+)</name>
        <dbReference type="ChEBI" id="CHEBI:29105"/>
    </ligand>
</feature>
<feature type="binding site" evidence="1">
    <location>
        <position position="941"/>
    </location>
    <ligand>
        <name>Zn(2+)</name>
        <dbReference type="ChEBI" id="CHEBI:29105"/>
    </ligand>
</feature>
<feature type="binding site" evidence="1">
    <location>
        <position position="958"/>
    </location>
    <ligand>
        <name>Zn(2+)</name>
        <dbReference type="ChEBI" id="CHEBI:29105"/>
    </ligand>
</feature>
<feature type="binding site" evidence="1">
    <location>
        <position position="961"/>
    </location>
    <ligand>
        <name>Zn(2+)</name>
        <dbReference type="ChEBI" id="CHEBI:29105"/>
    </ligand>
</feature>
<sequence length="968" mass="108080">MTQQTGQDADQRPSYKDTLNLLETGFGMRANAIHREPELQAFWKEKGIDLDLGRNNPGPVFTLHDGPPYANGALHMGHALNKVLKDIINKHRLMQGRKVRFVPGWDCHGLPIELKVLQAMNQEQRQALTPIKLRKKAAAYAHKQVAGQRAGFQRWGIWADWDHPYLTLQKDYEAAQIDVFGTMALKGHIYRGLKPVHWSPSSRTALAEAELEYPDGHTSPSVYVGFPVVDLPESLRSKLNAQGLDVPAASDTLSQCLQVAIWTTTPWTLPANLAVSVNDRLDYCLADDGNGQLLIVAAELCDSIASKLERPLQAKATVKGADLAGITYSHPLLERRSAIVVGGEYITTESGTGLVHTAPGHGVDDFNTGRKHGLPVLCPVDEAGTLTAEAGPFEGLNVLKDANAKIIAALEDSGSLLLQESYSHRYPYDWRTKKPTIFRATEQWFASVEGFRTEALTAIDGVQWLPASGRNRIESMVSERGDWCISRQRTWGVPIPVFYQRETGEVLLNSDSIAHVKALIAEHGADIWWEKDEVDLLPSSHKAEAHLWRKGTDTMDVWFDSGSSWASVSSQRDGLSYPADLYLEGSDQHRGWFQSSLLTSVAVNGTAPYRTVLTHGFALDEKGRKMSKSLGNVVDPMVIIEGGKNQKQEPAYGADVLRLWVSSVDYSADVPIGAGILRQLSDVYRKVRNTSRYLLGNLHDFIPSRDAISISDLPLLDRWMLQRTATVLDQISEAFERYEFFRFFQLLQNFCVADLSNFYLDIAKDRLYVSAPNDKRRRSCQTVMALIIERLAAAIAPVLCHMAEDIWQNIPYPTGTESVFLSGWPSVPEEWRDDSLRDPMQELRELRAAVNKVLEECRSKRKLGSSLEAAVRLEARTPALQDALQWLQSKGDQEVDGLRDWLLVSQLQIGGEPWAELLASDDNELAVIEVALSRGQKCERCWHYEADIGQYSDHPGLCGRCVSVLERR</sequence>
<protein>
    <recommendedName>
        <fullName evidence="1">Isoleucine--tRNA ligase</fullName>
        <ecNumber evidence="1">6.1.1.5</ecNumber>
    </recommendedName>
    <alternativeName>
        <fullName evidence="1">Isoleucyl-tRNA synthetase</fullName>
        <shortName evidence="1">IleRS</shortName>
    </alternativeName>
</protein>
<gene>
    <name evidence="1" type="primary">ileS</name>
    <name type="ordered locus">sync_0333</name>
</gene>
<name>SYI_SYNS3</name>
<reference key="1">
    <citation type="journal article" date="2006" name="Proc. Natl. Acad. Sci. U.S.A.">
        <title>Genome sequence of Synechococcus CC9311: insights into adaptation to a coastal environment.</title>
        <authorList>
            <person name="Palenik B."/>
            <person name="Ren Q."/>
            <person name="Dupont C.L."/>
            <person name="Myers G.S."/>
            <person name="Heidelberg J.F."/>
            <person name="Badger J.H."/>
            <person name="Madupu R."/>
            <person name="Nelson W.C."/>
            <person name="Brinkac L.M."/>
            <person name="Dodson R.J."/>
            <person name="Durkin A.S."/>
            <person name="Daugherty S.C."/>
            <person name="Sullivan S.A."/>
            <person name="Khouri H."/>
            <person name="Mohamoud Y."/>
            <person name="Halpin R."/>
            <person name="Paulsen I.T."/>
        </authorList>
    </citation>
    <scope>NUCLEOTIDE SEQUENCE [LARGE SCALE GENOMIC DNA]</scope>
    <source>
        <strain>CC9311</strain>
    </source>
</reference>
<dbReference type="EC" id="6.1.1.5" evidence="1"/>
<dbReference type="EMBL" id="CP000435">
    <property type="protein sequence ID" value="ABI45549.1"/>
    <property type="molecule type" value="Genomic_DNA"/>
</dbReference>
<dbReference type="RefSeq" id="WP_011618309.1">
    <property type="nucleotide sequence ID" value="NC_008319.1"/>
</dbReference>
<dbReference type="SMR" id="Q0IDA5"/>
<dbReference type="STRING" id="64471.sync_0333"/>
<dbReference type="KEGG" id="syg:sync_0333"/>
<dbReference type="eggNOG" id="COG0060">
    <property type="taxonomic scope" value="Bacteria"/>
</dbReference>
<dbReference type="HOGENOM" id="CLU_001493_7_0_3"/>
<dbReference type="OrthoDB" id="9810365at2"/>
<dbReference type="Proteomes" id="UP000001961">
    <property type="component" value="Chromosome"/>
</dbReference>
<dbReference type="GO" id="GO:0005737">
    <property type="term" value="C:cytoplasm"/>
    <property type="evidence" value="ECO:0007669"/>
    <property type="project" value="UniProtKB-SubCell"/>
</dbReference>
<dbReference type="GO" id="GO:0002161">
    <property type="term" value="F:aminoacyl-tRNA deacylase activity"/>
    <property type="evidence" value="ECO:0007669"/>
    <property type="project" value="InterPro"/>
</dbReference>
<dbReference type="GO" id="GO:0005524">
    <property type="term" value="F:ATP binding"/>
    <property type="evidence" value="ECO:0007669"/>
    <property type="project" value="UniProtKB-UniRule"/>
</dbReference>
<dbReference type="GO" id="GO:0004822">
    <property type="term" value="F:isoleucine-tRNA ligase activity"/>
    <property type="evidence" value="ECO:0007669"/>
    <property type="project" value="UniProtKB-UniRule"/>
</dbReference>
<dbReference type="GO" id="GO:0000049">
    <property type="term" value="F:tRNA binding"/>
    <property type="evidence" value="ECO:0007669"/>
    <property type="project" value="InterPro"/>
</dbReference>
<dbReference type="GO" id="GO:0008270">
    <property type="term" value="F:zinc ion binding"/>
    <property type="evidence" value="ECO:0007669"/>
    <property type="project" value="UniProtKB-UniRule"/>
</dbReference>
<dbReference type="GO" id="GO:0006428">
    <property type="term" value="P:isoleucyl-tRNA aminoacylation"/>
    <property type="evidence" value="ECO:0007669"/>
    <property type="project" value="UniProtKB-UniRule"/>
</dbReference>
<dbReference type="CDD" id="cd07960">
    <property type="entry name" value="Anticodon_Ia_Ile_BEm"/>
    <property type="match status" value="1"/>
</dbReference>
<dbReference type="FunFam" id="1.10.730.20:FF:000001">
    <property type="entry name" value="Isoleucine--tRNA ligase"/>
    <property type="match status" value="1"/>
</dbReference>
<dbReference type="FunFam" id="3.40.50.620:FF:000111">
    <property type="entry name" value="Mitochondrial isoleucyl-tRNA synthetase"/>
    <property type="match status" value="1"/>
</dbReference>
<dbReference type="Gene3D" id="1.10.730.20">
    <property type="match status" value="1"/>
</dbReference>
<dbReference type="Gene3D" id="3.40.50.620">
    <property type="entry name" value="HUPs"/>
    <property type="match status" value="2"/>
</dbReference>
<dbReference type="Gene3D" id="1.10.10.830">
    <property type="entry name" value="Ile-tRNA synthetase CP2 domain-like"/>
    <property type="match status" value="1"/>
</dbReference>
<dbReference type="Gene3D" id="3.90.740.10">
    <property type="entry name" value="Valyl/Leucyl/Isoleucyl-tRNA synthetase, editing domain"/>
    <property type="match status" value="1"/>
</dbReference>
<dbReference type="HAMAP" id="MF_02002">
    <property type="entry name" value="Ile_tRNA_synth_type1"/>
    <property type="match status" value="1"/>
</dbReference>
<dbReference type="InterPro" id="IPR001412">
    <property type="entry name" value="aa-tRNA-synth_I_CS"/>
</dbReference>
<dbReference type="InterPro" id="IPR002300">
    <property type="entry name" value="aa-tRNA-synth_Ia"/>
</dbReference>
<dbReference type="InterPro" id="IPR033708">
    <property type="entry name" value="Anticodon_Ile_BEm"/>
</dbReference>
<dbReference type="InterPro" id="IPR002301">
    <property type="entry name" value="Ile-tRNA-ligase"/>
</dbReference>
<dbReference type="InterPro" id="IPR023585">
    <property type="entry name" value="Ile-tRNA-ligase_type1"/>
</dbReference>
<dbReference type="InterPro" id="IPR050081">
    <property type="entry name" value="Ile-tRNA_ligase"/>
</dbReference>
<dbReference type="InterPro" id="IPR013155">
    <property type="entry name" value="M/V/L/I-tRNA-synth_anticd-bd"/>
</dbReference>
<dbReference type="InterPro" id="IPR014729">
    <property type="entry name" value="Rossmann-like_a/b/a_fold"/>
</dbReference>
<dbReference type="InterPro" id="IPR009080">
    <property type="entry name" value="tRNAsynth_Ia_anticodon-bd"/>
</dbReference>
<dbReference type="InterPro" id="IPR009008">
    <property type="entry name" value="Val/Leu/Ile-tRNA-synth_edit"/>
</dbReference>
<dbReference type="InterPro" id="IPR010663">
    <property type="entry name" value="Znf_FPG/IleRS"/>
</dbReference>
<dbReference type="NCBIfam" id="TIGR00392">
    <property type="entry name" value="ileS"/>
    <property type="match status" value="1"/>
</dbReference>
<dbReference type="PANTHER" id="PTHR42765:SF1">
    <property type="entry name" value="ISOLEUCINE--TRNA LIGASE, MITOCHONDRIAL"/>
    <property type="match status" value="1"/>
</dbReference>
<dbReference type="PANTHER" id="PTHR42765">
    <property type="entry name" value="SOLEUCYL-TRNA SYNTHETASE"/>
    <property type="match status" value="1"/>
</dbReference>
<dbReference type="Pfam" id="PF08264">
    <property type="entry name" value="Anticodon_1"/>
    <property type="match status" value="1"/>
</dbReference>
<dbReference type="Pfam" id="PF00133">
    <property type="entry name" value="tRNA-synt_1"/>
    <property type="match status" value="1"/>
</dbReference>
<dbReference type="Pfam" id="PF06827">
    <property type="entry name" value="zf-FPG_IleRS"/>
    <property type="match status" value="1"/>
</dbReference>
<dbReference type="PRINTS" id="PR00984">
    <property type="entry name" value="TRNASYNTHILE"/>
</dbReference>
<dbReference type="SUPFAM" id="SSF47323">
    <property type="entry name" value="Anticodon-binding domain of a subclass of class I aminoacyl-tRNA synthetases"/>
    <property type="match status" value="1"/>
</dbReference>
<dbReference type="SUPFAM" id="SSF52374">
    <property type="entry name" value="Nucleotidylyl transferase"/>
    <property type="match status" value="1"/>
</dbReference>
<dbReference type="SUPFAM" id="SSF50677">
    <property type="entry name" value="ValRS/IleRS/LeuRS editing domain"/>
    <property type="match status" value="1"/>
</dbReference>
<dbReference type="PROSITE" id="PS00178">
    <property type="entry name" value="AA_TRNA_LIGASE_I"/>
    <property type="match status" value="1"/>
</dbReference>